<comment type="function">
    <text evidence="1">DNA-dependent RNA polymerase catalyzes the transcription of DNA into RNA using the four ribonucleoside triphosphates as substrates.</text>
</comment>
<comment type="catalytic activity">
    <reaction evidence="1">
        <text>RNA(n) + a ribonucleoside 5'-triphosphate = RNA(n+1) + diphosphate</text>
        <dbReference type="Rhea" id="RHEA:21248"/>
        <dbReference type="Rhea" id="RHEA-COMP:14527"/>
        <dbReference type="Rhea" id="RHEA-COMP:17342"/>
        <dbReference type="ChEBI" id="CHEBI:33019"/>
        <dbReference type="ChEBI" id="CHEBI:61557"/>
        <dbReference type="ChEBI" id="CHEBI:140395"/>
        <dbReference type="EC" id="2.7.7.6"/>
    </reaction>
</comment>
<comment type="subunit">
    <text evidence="1">Homodimer. The RNAP catalytic core consists of 2 alpha, 1 beta, 1 beta' and 1 omega subunit. When a sigma factor is associated with the core the holoenzyme is formed, which can initiate transcription.</text>
</comment>
<comment type="domain">
    <text evidence="1">The N-terminal domain is essential for RNAP assembly and basal transcription, whereas the C-terminal domain is involved in interaction with transcriptional regulators and with upstream promoter elements.</text>
</comment>
<comment type="similarity">
    <text evidence="1">Belongs to the RNA polymerase alpha chain family.</text>
</comment>
<evidence type="ECO:0000255" key="1">
    <source>
        <dbReference type="HAMAP-Rule" id="MF_00059"/>
    </source>
</evidence>
<feature type="chain" id="PRO_0000264568" description="DNA-directed RNA polymerase subunit alpha">
    <location>
        <begin position="1"/>
        <end position="332"/>
    </location>
</feature>
<feature type="region of interest" description="Alpha N-terminal domain (alpha-NTD)" evidence="1">
    <location>
        <begin position="1"/>
        <end position="234"/>
    </location>
</feature>
<feature type="region of interest" description="Alpha C-terminal domain (alpha-CTD)" evidence="1">
    <location>
        <begin position="248"/>
        <end position="332"/>
    </location>
</feature>
<accession>Q2P009</accession>
<dbReference type="EC" id="2.7.7.6" evidence="1"/>
<dbReference type="EMBL" id="AP008229">
    <property type="protein sequence ID" value="BAE70118.1"/>
    <property type="molecule type" value="Genomic_DNA"/>
</dbReference>
<dbReference type="RefSeq" id="WP_002811635.1">
    <property type="nucleotide sequence ID" value="NC_007705.1"/>
</dbReference>
<dbReference type="SMR" id="Q2P009"/>
<dbReference type="KEGG" id="xom:XOO3363"/>
<dbReference type="HOGENOM" id="CLU_053084_0_1_6"/>
<dbReference type="GO" id="GO:0005737">
    <property type="term" value="C:cytoplasm"/>
    <property type="evidence" value="ECO:0007669"/>
    <property type="project" value="UniProtKB-ARBA"/>
</dbReference>
<dbReference type="GO" id="GO:0000428">
    <property type="term" value="C:DNA-directed RNA polymerase complex"/>
    <property type="evidence" value="ECO:0007669"/>
    <property type="project" value="UniProtKB-KW"/>
</dbReference>
<dbReference type="GO" id="GO:0003677">
    <property type="term" value="F:DNA binding"/>
    <property type="evidence" value="ECO:0007669"/>
    <property type="project" value="UniProtKB-UniRule"/>
</dbReference>
<dbReference type="GO" id="GO:0003899">
    <property type="term" value="F:DNA-directed RNA polymerase activity"/>
    <property type="evidence" value="ECO:0007669"/>
    <property type="project" value="UniProtKB-UniRule"/>
</dbReference>
<dbReference type="GO" id="GO:0046983">
    <property type="term" value="F:protein dimerization activity"/>
    <property type="evidence" value="ECO:0007669"/>
    <property type="project" value="InterPro"/>
</dbReference>
<dbReference type="GO" id="GO:0006351">
    <property type="term" value="P:DNA-templated transcription"/>
    <property type="evidence" value="ECO:0007669"/>
    <property type="project" value="UniProtKB-UniRule"/>
</dbReference>
<dbReference type="CDD" id="cd06928">
    <property type="entry name" value="RNAP_alpha_NTD"/>
    <property type="match status" value="1"/>
</dbReference>
<dbReference type="FunFam" id="1.10.150.20:FF:000001">
    <property type="entry name" value="DNA-directed RNA polymerase subunit alpha"/>
    <property type="match status" value="1"/>
</dbReference>
<dbReference type="FunFam" id="2.170.120.12:FF:000001">
    <property type="entry name" value="DNA-directed RNA polymerase subunit alpha"/>
    <property type="match status" value="1"/>
</dbReference>
<dbReference type="Gene3D" id="1.10.150.20">
    <property type="entry name" value="5' to 3' exonuclease, C-terminal subdomain"/>
    <property type="match status" value="1"/>
</dbReference>
<dbReference type="Gene3D" id="2.170.120.12">
    <property type="entry name" value="DNA-directed RNA polymerase, insert domain"/>
    <property type="match status" value="1"/>
</dbReference>
<dbReference type="Gene3D" id="3.30.1360.10">
    <property type="entry name" value="RNA polymerase, RBP11-like subunit"/>
    <property type="match status" value="1"/>
</dbReference>
<dbReference type="HAMAP" id="MF_00059">
    <property type="entry name" value="RNApol_bact_RpoA"/>
    <property type="match status" value="1"/>
</dbReference>
<dbReference type="InterPro" id="IPR011262">
    <property type="entry name" value="DNA-dir_RNA_pol_insert"/>
</dbReference>
<dbReference type="InterPro" id="IPR011263">
    <property type="entry name" value="DNA-dir_RNA_pol_RpoA/D/Rpb3"/>
</dbReference>
<dbReference type="InterPro" id="IPR011773">
    <property type="entry name" value="DNA-dir_RpoA"/>
</dbReference>
<dbReference type="InterPro" id="IPR036603">
    <property type="entry name" value="RBP11-like"/>
</dbReference>
<dbReference type="InterPro" id="IPR011260">
    <property type="entry name" value="RNAP_asu_C"/>
</dbReference>
<dbReference type="InterPro" id="IPR036643">
    <property type="entry name" value="RNApol_insert_sf"/>
</dbReference>
<dbReference type="NCBIfam" id="NF003513">
    <property type="entry name" value="PRK05182.1-2"/>
    <property type="match status" value="1"/>
</dbReference>
<dbReference type="NCBIfam" id="NF003519">
    <property type="entry name" value="PRK05182.2-5"/>
    <property type="match status" value="1"/>
</dbReference>
<dbReference type="NCBIfam" id="TIGR02027">
    <property type="entry name" value="rpoA"/>
    <property type="match status" value="1"/>
</dbReference>
<dbReference type="Pfam" id="PF01000">
    <property type="entry name" value="RNA_pol_A_bac"/>
    <property type="match status" value="1"/>
</dbReference>
<dbReference type="Pfam" id="PF03118">
    <property type="entry name" value="RNA_pol_A_CTD"/>
    <property type="match status" value="1"/>
</dbReference>
<dbReference type="Pfam" id="PF01193">
    <property type="entry name" value="RNA_pol_L"/>
    <property type="match status" value="1"/>
</dbReference>
<dbReference type="SMART" id="SM00662">
    <property type="entry name" value="RPOLD"/>
    <property type="match status" value="1"/>
</dbReference>
<dbReference type="SUPFAM" id="SSF47789">
    <property type="entry name" value="C-terminal domain of RNA polymerase alpha subunit"/>
    <property type="match status" value="1"/>
</dbReference>
<dbReference type="SUPFAM" id="SSF56553">
    <property type="entry name" value="Insert subdomain of RNA polymerase alpha subunit"/>
    <property type="match status" value="1"/>
</dbReference>
<dbReference type="SUPFAM" id="SSF55257">
    <property type="entry name" value="RBP11-like subunits of RNA polymerase"/>
    <property type="match status" value="1"/>
</dbReference>
<reference key="1">
    <citation type="journal article" date="2005" name="Jpn. Agric. Res. Q.">
        <title>Genome sequence of Xanthomonas oryzae pv. oryzae suggests contribution of large numbers of effector genes and insertion sequences to its race diversity.</title>
        <authorList>
            <person name="Ochiai H."/>
            <person name="Inoue Y."/>
            <person name="Takeya M."/>
            <person name="Sasaki A."/>
            <person name="Kaku H."/>
        </authorList>
    </citation>
    <scope>NUCLEOTIDE SEQUENCE [LARGE SCALE GENOMIC DNA]</scope>
    <source>
        <strain>MAFF 311018</strain>
    </source>
</reference>
<proteinExistence type="inferred from homology"/>
<gene>
    <name evidence="1" type="primary">rpoA</name>
    <name type="ordered locus">XOO3363</name>
</gene>
<keyword id="KW-0240">DNA-directed RNA polymerase</keyword>
<keyword id="KW-0548">Nucleotidyltransferase</keyword>
<keyword id="KW-0804">Transcription</keyword>
<keyword id="KW-0808">Transferase</keyword>
<name>RPOA_XANOM</name>
<protein>
    <recommendedName>
        <fullName evidence="1">DNA-directed RNA polymerase subunit alpha</fullName>
        <shortName evidence="1">RNAP subunit alpha</shortName>
        <ecNumber evidence="1">2.7.7.6</ecNumber>
    </recommendedName>
    <alternativeName>
        <fullName evidence="1">RNA polymerase subunit alpha</fullName>
    </alternativeName>
    <alternativeName>
        <fullName evidence="1">Transcriptase subunit alpha</fullName>
    </alternativeName>
</protein>
<organism>
    <name type="scientific">Xanthomonas oryzae pv. oryzae (strain MAFF 311018)</name>
    <dbReference type="NCBI Taxonomy" id="342109"/>
    <lineage>
        <taxon>Bacteria</taxon>
        <taxon>Pseudomonadati</taxon>
        <taxon>Pseudomonadota</taxon>
        <taxon>Gammaproteobacteria</taxon>
        <taxon>Lysobacterales</taxon>
        <taxon>Lysobacteraceae</taxon>
        <taxon>Xanthomonas</taxon>
    </lineage>
</organism>
<sequence>MTVTANQVLRPRGPQIERLTDNRAKVVIEPLERGYGHTLGNALRRVLLSSIPGFAITEVEIDGVLHEYTTVEGLQEDVLDVLLNLKDVAIRMHSGDSATLSLSKQGPGTVTAADIRTDHNVEIINGDHVICHLTKDTALNMRLKIERGFGYQPAAARRRPDEETRTIGRLMLDASFSPVRRVAYAVEAARVEQRTDLDKLVIDIETNGTIDAEEAVRTAADILSDQLSVFGDFTHRDRGAAKPAASGVDPVLLRPIDDLELTVRSANCLKAESIYYIGDLIQKTEVELLKTPNLGKKSLTEIKEVLAQRGLALGMKLENWPPAGVAQHGMLG</sequence>